<gene>
    <name evidence="1" type="primary">era</name>
    <name type="ordered locus">BPP3294</name>
</gene>
<organism>
    <name type="scientific">Bordetella parapertussis (strain 12822 / ATCC BAA-587 / NCTC 13253)</name>
    <dbReference type="NCBI Taxonomy" id="257311"/>
    <lineage>
        <taxon>Bacteria</taxon>
        <taxon>Pseudomonadati</taxon>
        <taxon>Pseudomonadota</taxon>
        <taxon>Betaproteobacteria</taxon>
        <taxon>Burkholderiales</taxon>
        <taxon>Alcaligenaceae</taxon>
        <taxon>Bordetella</taxon>
    </lineage>
</organism>
<name>ERA_BORPA</name>
<reference key="1">
    <citation type="journal article" date="2003" name="Nat. Genet.">
        <title>Comparative analysis of the genome sequences of Bordetella pertussis, Bordetella parapertussis and Bordetella bronchiseptica.</title>
        <authorList>
            <person name="Parkhill J."/>
            <person name="Sebaihia M."/>
            <person name="Preston A."/>
            <person name="Murphy L.D."/>
            <person name="Thomson N.R."/>
            <person name="Harris D.E."/>
            <person name="Holden M.T.G."/>
            <person name="Churcher C.M."/>
            <person name="Bentley S.D."/>
            <person name="Mungall K.L."/>
            <person name="Cerdeno-Tarraga A.-M."/>
            <person name="Temple L."/>
            <person name="James K.D."/>
            <person name="Harris B."/>
            <person name="Quail M.A."/>
            <person name="Achtman M."/>
            <person name="Atkin R."/>
            <person name="Baker S."/>
            <person name="Basham D."/>
            <person name="Bason N."/>
            <person name="Cherevach I."/>
            <person name="Chillingworth T."/>
            <person name="Collins M."/>
            <person name="Cronin A."/>
            <person name="Davis P."/>
            <person name="Doggett J."/>
            <person name="Feltwell T."/>
            <person name="Goble A."/>
            <person name="Hamlin N."/>
            <person name="Hauser H."/>
            <person name="Holroyd S."/>
            <person name="Jagels K."/>
            <person name="Leather S."/>
            <person name="Moule S."/>
            <person name="Norberczak H."/>
            <person name="O'Neil S."/>
            <person name="Ormond D."/>
            <person name="Price C."/>
            <person name="Rabbinowitsch E."/>
            <person name="Rutter S."/>
            <person name="Sanders M."/>
            <person name="Saunders D."/>
            <person name="Seeger K."/>
            <person name="Sharp S."/>
            <person name="Simmonds M."/>
            <person name="Skelton J."/>
            <person name="Squares R."/>
            <person name="Squares S."/>
            <person name="Stevens K."/>
            <person name="Unwin L."/>
            <person name="Whitehead S."/>
            <person name="Barrell B.G."/>
            <person name="Maskell D.J."/>
        </authorList>
    </citation>
    <scope>NUCLEOTIDE SEQUENCE [LARGE SCALE GENOMIC DNA]</scope>
    <source>
        <strain>12822 / ATCC BAA-587 / NCTC 13253</strain>
    </source>
</reference>
<protein>
    <recommendedName>
        <fullName evidence="1">GTPase Era</fullName>
    </recommendedName>
</protein>
<proteinExistence type="inferred from homology"/>
<comment type="function">
    <text evidence="1">An essential GTPase that binds both GDP and GTP, with rapid nucleotide exchange. Plays a role in 16S rRNA processing and 30S ribosomal subunit biogenesis and possibly also in cell cycle regulation and energy metabolism.</text>
</comment>
<comment type="subunit">
    <text evidence="1">Monomer.</text>
</comment>
<comment type="subcellular location">
    <subcellularLocation>
        <location>Cytoplasm</location>
    </subcellularLocation>
    <subcellularLocation>
        <location evidence="1">Cell inner membrane</location>
        <topology evidence="1">Peripheral membrane protein</topology>
    </subcellularLocation>
</comment>
<comment type="similarity">
    <text evidence="1 2">Belongs to the TRAFAC class TrmE-Era-EngA-EngB-Septin-like GTPase superfamily. Era GTPase family.</text>
</comment>
<evidence type="ECO:0000255" key="1">
    <source>
        <dbReference type="HAMAP-Rule" id="MF_00367"/>
    </source>
</evidence>
<evidence type="ECO:0000255" key="2">
    <source>
        <dbReference type="PROSITE-ProRule" id="PRU01050"/>
    </source>
</evidence>
<feature type="chain" id="PRO_1000121304" description="GTPase Era">
    <location>
        <begin position="1"/>
        <end position="296"/>
    </location>
</feature>
<feature type="domain" description="Era-type G" evidence="2">
    <location>
        <begin position="7"/>
        <end position="174"/>
    </location>
</feature>
<feature type="domain" description="KH type-2" evidence="1">
    <location>
        <begin position="205"/>
        <end position="281"/>
    </location>
</feature>
<feature type="region of interest" description="G1" evidence="2">
    <location>
        <begin position="15"/>
        <end position="22"/>
    </location>
</feature>
<feature type="region of interest" description="G2" evidence="2">
    <location>
        <begin position="41"/>
        <end position="45"/>
    </location>
</feature>
<feature type="region of interest" description="G3" evidence="2">
    <location>
        <begin position="62"/>
        <end position="65"/>
    </location>
</feature>
<feature type="region of interest" description="G4" evidence="2">
    <location>
        <begin position="123"/>
        <end position="126"/>
    </location>
</feature>
<feature type="region of interest" description="G5" evidence="2">
    <location>
        <begin position="153"/>
        <end position="155"/>
    </location>
</feature>
<feature type="binding site" evidence="1">
    <location>
        <begin position="15"/>
        <end position="22"/>
    </location>
    <ligand>
        <name>GTP</name>
        <dbReference type="ChEBI" id="CHEBI:37565"/>
    </ligand>
</feature>
<feature type="binding site" evidence="1">
    <location>
        <begin position="62"/>
        <end position="66"/>
    </location>
    <ligand>
        <name>GTP</name>
        <dbReference type="ChEBI" id="CHEBI:37565"/>
    </ligand>
</feature>
<feature type="binding site" evidence="1">
    <location>
        <begin position="123"/>
        <end position="126"/>
    </location>
    <ligand>
        <name>GTP</name>
        <dbReference type="ChEBI" id="CHEBI:37565"/>
    </ligand>
</feature>
<dbReference type="EMBL" id="BX640433">
    <property type="protein sequence ID" value="CAE38579.1"/>
    <property type="molecule type" value="Genomic_DNA"/>
</dbReference>
<dbReference type="RefSeq" id="WP_003813784.1">
    <property type="nucleotide sequence ID" value="NC_002928.3"/>
</dbReference>
<dbReference type="SMR" id="Q7W5J7"/>
<dbReference type="GeneID" id="93205076"/>
<dbReference type="KEGG" id="bpa:BPP3294"/>
<dbReference type="HOGENOM" id="CLU_038009_1_0_4"/>
<dbReference type="Proteomes" id="UP000001421">
    <property type="component" value="Chromosome"/>
</dbReference>
<dbReference type="GO" id="GO:0005829">
    <property type="term" value="C:cytosol"/>
    <property type="evidence" value="ECO:0007669"/>
    <property type="project" value="TreeGrafter"/>
</dbReference>
<dbReference type="GO" id="GO:0005886">
    <property type="term" value="C:plasma membrane"/>
    <property type="evidence" value="ECO:0007669"/>
    <property type="project" value="UniProtKB-SubCell"/>
</dbReference>
<dbReference type="GO" id="GO:0005525">
    <property type="term" value="F:GTP binding"/>
    <property type="evidence" value="ECO:0007669"/>
    <property type="project" value="UniProtKB-UniRule"/>
</dbReference>
<dbReference type="GO" id="GO:0003924">
    <property type="term" value="F:GTPase activity"/>
    <property type="evidence" value="ECO:0007669"/>
    <property type="project" value="UniProtKB-UniRule"/>
</dbReference>
<dbReference type="GO" id="GO:0043024">
    <property type="term" value="F:ribosomal small subunit binding"/>
    <property type="evidence" value="ECO:0007669"/>
    <property type="project" value="TreeGrafter"/>
</dbReference>
<dbReference type="GO" id="GO:0070181">
    <property type="term" value="F:small ribosomal subunit rRNA binding"/>
    <property type="evidence" value="ECO:0007669"/>
    <property type="project" value="UniProtKB-UniRule"/>
</dbReference>
<dbReference type="GO" id="GO:0000028">
    <property type="term" value="P:ribosomal small subunit assembly"/>
    <property type="evidence" value="ECO:0007669"/>
    <property type="project" value="TreeGrafter"/>
</dbReference>
<dbReference type="CDD" id="cd04163">
    <property type="entry name" value="Era"/>
    <property type="match status" value="1"/>
</dbReference>
<dbReference type="CDD" id="cd22534">
    <property type="entry name" value="KH-II_Era"/>
    <property type="match status" value="1"/>
</dbReference>
<dbReference type="Gene3D" id="3.30.300.20">
    <property type="match status" value="1"/>
</dbReference>
<dbReference type="Gene3D" id="3.40.50.300">
    <property type="entry name" value="P-loop containing nucleotide triphosphate hydrolases"/>
    <property type="match status" value="1"/>
</dbReference>
<dbReference type="HAMAP" id="MF_00367">
    <property type="entry name" value="GTPase_Era"/>
    <property type="match status" value="1"/>
</dbReference>
<dbReference type="InterPro" id="IPR030388">
    <property type="entry name" value="G_ERA_dom"/>
</dbReference>
<dbReference type="InterPro" id="IPR006073">
    <property type="entry name" value="GTP-bd"/>
</dbReference>
<dbReference type="InterPro" id="IPR005662">
    <property type="entry name" value="GTPase_Era-like"/>
</dbReference>
<dbReference type="InterPro" id="IPR015946">
    <property type="entry name" value="KH_dom-like_a/b"/>
</dbReference>
<dbReference type="InterPro" id="IPR004044">
    <property type="entry name" value="KH_dom_type_2"/>
</dbReference>
<dbReference type="InterPro" id="IPR009019">
    <property type="entry name" value="KH_sf_prok-type"/>
</dbReference>
<dbReference type="InterPro" id="IPR027417">
    <property type="entry name" value="P-loop_NTPase"/>
</dbReference>
<dbReference type="InterPro" id="IPR005225">
    <property type="entry name" value="Small_GTP-bd"/>
</dbReference>
<dbReference type="NCBIfam" id="TIGR00436">
    <property type="entry name" value="era"/>
    <property type="match status" value="1"/>
</dbReference>
<dbReference type="NCBIfam" id="NF000908">
    <property type="entry name" value="PRK00089.1"/>
    <property type="match status" value="1"/>
</dbReference>
<dbReference type="NCBIfam" id="TIGR00231">
    <property type="entry name" value="small_GTP"/>
    <property type="match status" value="1"/>
</dbReference>
<dbReference type="PANTHER" id="PTHR42698">
    <property type="entry name" value="GTPASE ERA"/>
    <property type="match status" value="1"/>
</dbReference>
<dbReference type="PANTHER" id="PTHR42698:SF1">
    <property type="entry name" value="GTPASE ERA, MITOCHONDRIAL"/>
    <property type="match status" value="1"/>
</dbReference>
<dbReference type="Pfam" id="PF07650">
    <property type="entry name" value="KH_2"/>
    <property type="match status" value="1"/>
</dbReference>
<dbReference type="Pfam" id="PF01926">
    <property type="entry name" value="MMR_HSR1"/>
    <property type="match status" value="1"/>
</dbReference>
<dbReference type="PRINTS" id="PR00326">
    <property type="entry name" value="GTP1OBG"/>
</dbReference>
<dbReference type="SUPFAM" id="SSF52540">
    <property type="entry name" value="P-loop containing nucleoside triphosphate hydrolases"/>
    <property type="match status" value="1"/>
</dbReference>
<dbReference type="SUPFAM" id="SSF54814">
    <property type="entry name" value="Prokaryotic type KH domain (KH-domain type II)"/>
    <property type="match status" value="1"/>
</dbReference>
<dbReference type="PROSITE" id="PS51713">
    <property type="entry name" value="G_ERA"/>
    <property type="match status" value="1"/>
</dbReference>
<accession>Q7W5J7</accession>
<sequence length="296" mass="33032">MSNPQFRAGFVAIVGRPNVGKSTLTNALIGTKISIVSRKAQTTRHRIHGVLTREHEQFVFVDTPGFQTRHGGAMNRMMNRVVTQALADVDVVVHVVEAGKWSEGDAKLLPLLPKSRRSILVVSKIDALKNRDELFPFVSKLMALHAYDAVVPVSATKGQQLDQLLDEIAAGLPQGDPMFEEDTLTDRPVRFIAAELVREKIFRLVGDELPYGCTVVIEQWEETERGVRIAACVVVERESHRPILLGAGGMHMKRIATEARQDIAKLLDMPVHLEIYIKVRKGWSDREGALRDLGYE</sequence>
<keyword id="KW-0997">Cell inner membrane</keyword>
<keyword id="KW-1003">Cell membrane</keyword>
<keyword id="KW-0963">Cytoplasm</keyword>
<keyword id="KW-0342">GTP-binding</keyword>
<keyword id="KW-0472">Membrane</keyword>
<keyword id="KW-0547">Nucleotide-binding</keyword>
<keyword id="KW-0690">Ribosome biogenesis</keyword>
<keyword id="KW-0694">RNA-binding</keyword>
<keyword id="KW-0699">rRNA-binding</keyword>